<sequence length="39" mass="4115">SDSKIGNGCFGFPLDRIGSVSGLGCNRIMQNPPKKFSGE</sequence>
<reference key="1">
    <citation type="journal article" date="2005" name="Biochem. Biophys. Res. Commun.">
        <title>Novel natriuretic peptides from the venom of the inland taipan (Oxyuranus microlepidotus): isolation, chemical and biological characterisation.</title>
        <authorList>
            <person name="Fry B.G."/>
            <person name="Wickramaratana J.C."/>
            <person name="Lemme S."/>
            <person name="Beuve A."/>
            <person name="Garbers D."/>
            <person name="Hodgson W.C."/>
            <person name="Alewood P.F."/>
        </authorList>
    </citation>
    <scope>PROTEIN SEQUENCE</scope>
    <scope>FUNCTION</scope>
    <scope>SUBCELLULAR LOCATION</scope>
    <scope>TISSUE SPECIFICITY</scope>
    <scope>MASS SPECTROMETRY</scope>
    <scope>DISULFIDE BOND</scope>
    <source>
        <tissue>Venom</tissue>
    </source>
</reference>
<reference evidence="8" key="2">
    <citation type="journal article" date="2023" name="Molecules">
        <title>Taipan natriuretic peptides are potent and selective agonists for the natriuretic peptide receptor A.</title>
        <authorList>
            <person name="Vink S."/>
            <person name="Akondi K.B."/>
            <person name="Jin J."/>
            <person name="Poth K."/>
            <person name="Torres A.M."/>
            <person name="Kuchel P.W."/>
            <person name="Burke S.L."/>
            <person name="Head G.A."/>
            <person name="Alewood P.F."/>
        </authorList>
    </citation>
    <scope>STRUCTURE BY NMR</scope>
    <scope>FUNCTION</scope>
    <scope>SYNTHESIS</scope>
    <scope>DISULFIDE BOND</scope>
    <scope>BIOASSAY</scope>
</reference>
<organism>
    <name type="scientific">Oxyuranus microlepidotus</name>
    <name type="common">Inland taipan</name>
    <name type="synonym">Diemenia microlepidota</name>
    <dbReference type="NCBI Taxonomy" id="111177"/>
    <lineage>
        <taxon>Eukaryota</taxon>
        <taxon>Metazoa</taxon>
        <taxon>Chordata</taxon>
        <taxon>Craniata</taxon>
        <taxon>Vertebrata</taxon>
        <taxon>Euteleostomi</taxon>
        <taxon>Lepidosauria</taxon>
        <taxon>Squamata</taxon>
        <taxon>Bifurcata</taxon>
        <taxon>Unidentata</taxon>
        <taxon>Episquamata</taxon>
        <taxon>Toxicofera</taxon>
        <taxon>Serpentes</taxon>
        <taxon>Colubroidea</taxon>
        <taxon>Elapidae</taxon>
        <taxon>Hydrophiinae</taxon>
        <taxon>Oxyuranus</taxon>
    </lineage>
</organism>
<evidence type="ECO:0000250" key="1">
    <source>
        <dbReference type="UniProtKB" id="C6EVG7"/>
    </source>
</evidence>
<evidence type="ECO:0000269" key="2">
    <source>
    </source>
</evidence>
<evidence type="ECO:0000269" key="3">
    <source>
    </source>
</evidence>
<evidence type="ECO:0000303" key="4">
    <source>
    </source>
</evidence>
<evidence type="ECO:0000303" key="5">
    <source>
    </source>
</evidence>
<evidence type="ECO:0000305" key="6"/>
<evidence type="ECO:0000305" key="7">
    <source>
    </source>
</evidence>
<evidence type="ECO:0000312" key="8">
    <source>
        <dbReference type="PDB" id="8S9Y"/>
    </source>
</evidence>
<evidence type="ECO:0007744" key="9">
    <source>
        <dbReference type="PDB" id="8S9Y"/>
    </source>
</evidence>
<evidence type="ECO:0007829" key="10">
    <source>
        <dbReference type="PDB" id="8S9Y"/>
    </source>
</evidence>
<keyword id="KW-0002">3D-structure</keyword>
<keyword id="KW-0903">Direct protein sequencing</keyword>
<keyword id="KW-1015">Disulfide bond</keyword>
<keyword id="KW-0382">Hypotensive agent</keyword>
<keyword id="KW-0964">Secreted</keyword>
<keyword id="KW-0800">Toxin</keyword>
<keyword id="KW-0838">Vasoactive</keyword>
<keyword id="KW-0840">Vasodilator</keyword>
<comment type="function">
    <text evidence="1 2 3">Snake venom natriuretic peptide that exhibits vasoactive and hypotensive activity (By similarity). Produces a near complete relaxation in pre-contracted aortae by activating the natriuretic peptide receptor 1 (NPR1) (PubMed:15652496). Stimulates cGMP production through the natriuretic peptide receptor 1 (NPR1) with high potencies for the rat NPR1 (EC(50)=100 nM), and very weak potencies over human NPR1 (28% activation at 10 uM) (PubMed:37049825). In vivo, reduces both systolic and diastolic blood pressure with no effect on heart rate, when intravenously injected in conscious rabbits (PubMed:37049825). Also enhances the bradycardia due to cardiac afferent stimulation (Bezold-Jarisch reflex) (PubMed:37049825).</text>
</comment>
<comment type="subcellular location">
    <subcellularLocation>
        <location evidence="2">Secreted</location>
    </subcellularLocation>
</comment>
<comment type="tissue specificity">
    <text evidence="7">Expressed by the venom gland.</text>
</comment>
<comment type="mass spectrometry" mass="4112.0" method="Electrospray" evidence="2"/>
<comment type="miscellaneous">
    <text evidence="3">Has a high stability. Is highly resistant to proteolytic degradation, due to its extended C-terminal tail. A high percentage (72%) of this protein is still present in human plasma after 24 hours, in contrast to human atrial natriuretic peptide (ANNP), which has a half-life of less than 3 hours. In addition, it is highly resistant to the metalloproteinase and serine proteases tested, in comparison with ANNP.</text>
</comment>
<comment type="similarity">
    <text evidence="6">Belongs to the natriuretic peptide family.</text>
</comment>
<name>VNPC_OXYMI</name>
<accession>P83230</accession>
<feature type="peptide" id="PRO_0000045075" description="Natriuretic peptide TNPc" evidence="2">
    <location>
        <begin position="1"/>
        <end position="39"/>
    </location>
</feature>
<feature type="disulfide bond" evidence="2 3 9">
    <location>
        <begin position="9"/>
        <end position="25"/>
    </location>
</feature>
<feature type="strand" evidence="10">
    <location>
        <begin position="3"/>
        <end position="5"/>
    </location>
</feature>
<feature type="strand" evidence="10">
    <location>
        <begin position="8"/>
        <end position="12"/>
    </location>
</feature>
<feature type="turn" evidence="10">
    <location>
        <begin position="14"/>
        <end position="16"/>
    </location>
</feature>
<feature type="strand" evidence="10">
    <location>
        <begin position="27"/>
        <end position="30"/>
    </location>
</feature>
<feature type="strand" evidence="10">
    <location>
        <begin position="33"/>
        <end position="36"/>
    </location>
</feature>
<protein>
    <recommendedName>
        <fullName evidence="5">Natriuretic peptide TNPc</fullName>
        <shortName evidence="4">TNP-c</shortName>
    </recommendedName>
    <alternativeName>
        <fullName>Taipan natriuretic peptide</fullName>
    </alternativeName>
    <alternativeName>
        <fullName>Venom natriuretic peptide OxsSNPc</fullName>
    </alternativeName>
</protein>
<proteinExistence type="evidence at protein level"/>
<dbReference type="PDB" id="8S9Y">
    <property type="method" value="NMR"/>
    <property type="chains" value="A=1-39"/>
</dbReference>
<dbReference type="PDBsum" id="8S9Y"/>
<dbReference type="SMR" id="P83230"/>
<dbReference type="GO" id="GO:0005576">
    <property type="term" value="C:extracellular region"/>
    <property type="evidence" value="ECO:0007669"/>
    <property type="project" value="UniProtKB-SubCell"/>
</dbReference>
<dbReference type="GO" id="GO:0005179">
    <property type="term" value="F:hormone activity"/>
    <property type="evidence" value="ECO:0007669"/>
    <property type="project" value="InterPro"/>
</dbReference>
<dbReference type="GO" id="GO:0090729">
    <property type="term" value="F:toxin activity"/>
    <property type="evidence" value="ECO:0007669"/>
    <property type="project" value="UniProtKB-KW"/>
</dbReference>
<dbReference type="GO" id="GO:0008217">
    <property type="term" value="P:regulation of blood pressure"/>
    <property type="evidence" value="ECO:0007669"/>
    <property type="project" value="UniProtKB-KW"/>
</dbReference>
<dbReference type="GO" id="GO:0042311">
    <property type="term" value="P:vasodilation"/>
    <property type="evidence" value="ECO:0007669"/>
    <property type="project" value="UniProtKB-KW"/>
</dbReference>
<dbReference type="InterPro" id="IPR000663">
    <property type="entry name" value="Natr_peptide"/>
</dbReference>
<dbReference type="InterPro" id="IPR030480">
    <property type="entry name" value="Natr_peptide_CS"/>
</dbReference>
<dbReference type="InterPro" id="IPR002408">
    <property type="entry name" value="Natriuretic_peptide_brain"/>
</dbReference>
<dbReference type="Pfam" id="PF00212">
    <property type="entry name" value="ANP"/>
    <property type="match status" value="1"/>
</dbReference>
<dbReference type="PRINTS" id="PR00712">
    <property type="entry name" value="BNATPEPTIDE"/>
</dbReference>
<dbReference type="SMART" id="SM00183">
    <property type="entry name" value="NAT_PEP"/>
    <property type="match status" value="1"/>
</dbReference>
<dbReference type="PROSITE" id="PS00263">
    <property type="entry name" value="NATRIURETIC_PEPTIDE"/>
    <property type="match status" value="1"/>
</dbReference>